<proteinExistence type="evidence at protein level"/>
<name>ITIH3_MESAU</name>
<dbReference type="EMBL" id="D89287">
    <property type="protein sequence ID" value="BAA13940.1"/>
    <property type="molecule type" value="mRNA"/>
</dbReference>
<dbReference type="RefSeq" id="NP_001268279.1">
    <property type="nucleotide sequence ID" value="NM_001281350.1"/>
</dbReference>
<dbReference type="SMR" id="P97280"/>
<dbReference type="GlyCosmos" id="P97280">
    <property type="glycosylation" value="2 sites, No reported glycans"/>
</dbReference>
<dbReference type="GeneID" id="101826575"/>
<dbReference type="KEGG" id="maua:101826575"/>
<dbReference type="CTD" id="3699"/>
<dbReference type="OrthoDB" id="299997at2759"/>
<dbReference type="Proteomes" id="UP000189706">
    <property type="component" value="Unplaced"/>
</dbReference>
<dbReference type="GO" id="GO:0005576">
    <property type="term" value="C:extracellular region"/>
    <property type="evidence" value="ECO:0007669"/>
    <property type="project" value="UniProtKB-SubCell"/>
</dbReference>
<dbReference type="GO" id="GO:0004867">
    <property type="term" value="F:serine-type endopeptidase inhibitor activity"/>
    <property type="evidence" value="ECO:0007669"/>
    <property type="project" value="UniProtKB-KW"/>
</dbReference>
<dbReference type="GO" id="GO:0030212">
    <property type="term" value="P:hyaluronan metabolic process"/>
    <property type="evidence" value="ECO:0007669"/>
    <property type="project" value="InterPro"/>
</dbReference>
<dbReference type="FunFam" id="3.40.50.410:FF:000013">
    <property type="entry name" value="inter-alpha-trypsin inhibitor heavy chain H2"/>
    <property type="match status" value="1"/>
</dbReference>
<dbReference type="Gene3D" id="3.40.50.410">
    <property type="entry name" value="von Willebrand factor, type A domain"/>
    <property type="match status" value="1"/>
</dbReference>
<dbReference type="InterPro" id="IPR010600">
    <property type="entry name" value="ITI_HC_C"/>
</dbReference>
<dbReference type="InterPro" id="IPR050934">
    <property type="entry name" value="ITIH"/>
</dbReference>
<dbReference type="InterPro" id="IPR013694">
    <property type="entry name" value="VIT"/>
</dbReference>
<dbReference type="InterPro" id="IPR002035">
    <property type="entry name" value="VWF_A"/>
</dbReference>
<dbReference type="InterPro" id="IPR036465">
    <property type="entry name" value="vWFA_dom_sf"/>
</dbReference>
<dbReference type="PANTHER" id="PTHR10338">
    <property type="entry name" value="INTER-ALPHA-TRYPSIN INHIBITOR HEAVY CHAIN FAMILY MEMBER"/>
    <property type="match status" value="1"/>
</dbReference>
<dbReference type="PANTHER" id="PTHR10338:SF115">
    <property type="entry name" value="INTER-ALPHA-TRYPSIN INHIBITOR HEAVY CHAIN H3"/>
    <property type="match status" value="1"/>
</dbReference>
<dbReference type="Pfam" id="PF06668">
    <property type="entry name" value="ITI_HC_C"/>
    <property type="match status" value="1"/>
</dbReference>
<dbReference type="Pfam" id="PF08487">
    <property type="entry name" value="VIT"/>
    <property type="match status" value="1"/>
</dbReference>
<dbReference type="Pfam" id="PF00092">
    <property type="entry name" value="VWA"/>
    <property type="match status" value="1"/>
</dbReference>
<dbReference type="SMART" id="SM00609">
    <property type="entry name" value="VIT"/>
    <property type="match status" value="1"/>
</dbReference>
<dbReference type="SMART" id="SM00327">
    <property type="entry name" value="VWA"/>
    <property type="match status" value="1"/>
</dbReference>
<dbReference type="SUPFAM" id="SSF53300">
    <property type="entry name" value="vWA-like"/>
    <property type="match status" value="1"/>
</dbReference>
<dbReference type="PROSITE" id="PS51468">
    <property type="entry name" value="VIT"/>
    <property type="match status" value="1"/>
</dbReference>
<dbReference type="PROSITE" id="PS50234">
    <property type="entry name" value="VWFA"/>
    <property type="match status" value="1"/>
</dbReference>
<organism>
    <name type="scientific">Mesocricetus auratus</name>
    <name type="common">Golden hamster</name>
    <dbReference type="NCBI Taxonomy" id="10036"/>
    <lineage>
        <taxon>Eukaryota</taxon>
        <taxon>Metazoa</taxon>
        <taxon>Chordata</taxon>
        <taxon>Craniata</taxon>
        <taxon>Vertebrata</taxon>
        <taxon>Euteleostomi</taxon>
        <taxon>Mammalia</taxon>
        <taxon>Eutheria</taxon>
        <taxon>Euarchontoglires</taxon>
        <taxon>Glires</taxon>
        <taxon>Rodentia</taxon>
        <taxon>Myomorpha</taxon>
        <taxon>Muroidea</taxon>
        <taxon>Cricetidae</taxon>
        <taxon>Cricetinae</taxon>
        <taxon>Mesocricetus</taxon>
    </lineage>
</organism>
<keyword id="KW-0165">Cleavage on pair of basic residues</keyword>
<keyword id="KW-0903">Direct protein sequencing</keyword>
<keyword id="KW-0325">Glycoprotein</keyword>
<keyword id="KW-0646">Protease inhibitor</keyword>
<keyword id="KW-0654">Proteoglycan</keyword>
<keyword id="KW-1185">Reference proteome</keyword>
<keyword id="KW-0964">Secreted</keyword>
<keyword id="KW-0722">Serine protease inhibitor</keyword>
<keyword id="KW-0732">Signal</keyword>
<gene>
    <name type="primary">ITIH3</name>
</gene>
<accession>P97280</accession>
<evidence type="ECO:0000250" key="1"/>
<evidence type="ECO:0000250" key="2">
    <source>
        <dbReference type="UniProtKB" id="Q06033"/>
    </source>
</evidence>
<evidence type="ECO:0000255" key="3"/>
<evidence type="ECO:0000255" key="4">
    <source>
        <dbReference type="PROSITE-ProRule" id="PRU00219"/>
    </source>
</evidence>
<evidence type="ECO:0000255" key="5">
    <source>
        <dbReference type="PROSITE-ProRule" id="PRU00801"/>
    </source>
</evidence>
<evidence type="ECO:0000305" key="6"/>
<feature type="signal peptide" evidence="3">
    <location>
        <begin position="1"/>
        <end position="18"/>
    </location>
</feature>
<feature type="propeptide" id="PRO_0000016532" evidence="1">
    <location>
        <begin position="19"/>
        <end position="30"/>
    </location>
</feature>
<feature type="chain" id="PRO_0000016533" description="Inter-alpha-trypsin inhibitor heavy chain H3">
    <location>
        <begin position="31"/>
        <end position="646"/>
    </location>
</feature>
<feature type="propeptide" id="PRO_0000016534" evidence="1">
    <location>
        <begin position="647"/>
        <end position="886"/>
    </location>
</feature>
<feature type="domain" description="VIT" evidence="5">
    <location>
        <begin position="26"/>
        <end position="155"/>
    </location>
</feature>
<feature type="domain" description="VWFA" evidence="4">
    <location>
        <begin position="279"/>
        <end position="439"/>
    </location>
</feature>
<feature type="modified residue" description="Aspartate 1-(chondroitin 4-sulfate)-ester" evidence="1">
    <location>
        <position position="646"/>
    </location>
</feature>
<feature type="glycosylation site" description="N-linked (GlcNAc...) asparagine" evidence="3">
    <location>
        <position position="88"/>
    </location>
</feature>
<feature type="glycosylation site" description="N-linked (GlcNAc...) asparagine" evidence="3">
    <location>
        <position position="577"/>
    </location>
</feature>
<protein>
    <recommendedName>
        <fullName>Inter-alpha-trypsin inhibitor heavy chain H3</fullName>
        <shortName>ITI heavy chain H3</shortName>
        <shortName>ITI-HC3</shortName>
        <shortName>Inter-alpha-inhibitor heavy chain 3</shortName>
    </recommendedName>
</protein>
<reference key="1">
    <citation type="journal article" date="1997" name="J. Biochem.">
        <title>Molecular cloning and sequencing of cDNAs encoding three heavy-chain precursors of the inter-alpha-trypsin inhibitor in Syrian hamster: implications for the evolution of the inter-alpha-trypsin inhibitor heavy chain family.</title>
        <authorList>
            <person name="Nakatani T."/>
            <person name="Suzuki Y."/>
            <person name="Yamamoto T."/>
            <person name="Sinohara H."/>
        </authorList>
    </citation>
    <scope>NUCLEOTIDE SEQUENCE [MRNA]</scope>
    <source>
        <tissue>Liver</tissue>
    </source>
</reference>
<reference key="2">
    <citation type="journal article" date="1996" name="J. Biochem.">
        <title>Inter-alpha-trypsin inhibitor and its related proteins in Syrian hamster urine and plasma.</title>
        <authorList>
            <person name="Yamamoto T."/>
            <person name="Yamamoto K."/>
            <person name="Sinohara H."/>
        </authorList>
    </citation>
    <scope>PROTEIN SEQUENCE OF 31-50; 446-472 AND 504-523</scope>
    <scope>SUBUNIT</scope>
    <source>
        <tissue>Plasma</tissue>
    </source>
</reference>
<sequence length="886" mass="99018">MWWPYLVLALLSGLEASGFPRSPLRLLGKRSLPEGVVDGVEVYSTKISCKVTSRFAHNVVTTRAVNRADQAKEVSFDVELPKTAFITNFTLTIDGVTYPGNIKEKEVAQKQYDKAVSQGKTAGLVKASGRKLEKFTVSVNVAAGSKVTFELTYEELLKRHKGKYEMYLKVQPKQLVRHFEIDAHIFEPQGISMLDAEASFITNDLLGSALTKSFSGKKGHVSFKPSLDQQRSCPTCTDSLLNGDFTIVYDVNRESPGNVQVVNGYFVHFFAPQGLPVVPKNIVFVIDISGSMAGRKIQQTRVALLKILDDMKQDDYLNFILFSTGVTTWKDSLVQATPANLEEARTFVRSISDQGMTNINDGLLRGIRMLTDAREQHTVPERSTSIIIMLTDGDANTGESRPEKIQENVRKAIEGRFPLYNLGFGNNLNYNFLETMALENHGVARRIYEDSDANLQLQGFYEEVANPLLTNVEVEYPENAILDLTKNSYPHFYDGSETAVAGRLADSDMNNFKADVKGHGALNDLTFTEEVDMKEMDAALKEQGYIFGNYIERLWAYLTIEQLLEKRKNAHGEEKENLTAQALELSLKYHFVTPLTPMVVTKPEDNEDQTSIADKPGEDAPYAATSTAYLTSHQSPPTPYYYVDGDPHFIIQVPGKNDTICFNIDEKPGTVLRLIQDPVTGITVTGQIIGDKGSSPYSRTGKTYFGKLGITHAWMDFRIEVTTEKIILGTEDELSTFSWLDTVTITQTGLFVAINRKKNMVVSFGDGVNFVIVLHQVWKKHPLHQDFLGFYVVDSHRMSARTHGLLGQFFRPFDFEVSDVRPGSDPAKPDATMVVKNHQLTVTRGSQRDYRKDASVGTKVTCWFVHNNGEGLIDGVHTDYIVPSLF</sequence>
<comment type="function">
    <text evidence="1">May act as a carrier of hyaluronan in serum or as a binding protein between hyaluronan and other matrix protein, including those on cell surfaces in tissues to regulate the localization, synthesis and degradation of hyaluronan which are essential to cells undergoing biological processes.</text>
</comment>
<comment type="subunit">
    <text evidence="2">I-alpha-I plasma protease inhibitors are assembled from one or two heavy chains (HC) and one light chain, bikunin. Pre-alpha-inhibitor (P-alpha-I) is composed of ITIH3/HC3 and bikunin.</text>
</comment>
<comment type="subcellular location">
    <subcellularLocation>
        <location>Secreted</location>
    </subcellularLocation>
</comment>
<comment type="PTM">
    <text evidence="1">Heavy chains are linked to bikunin via chondroitin 4-sulfate esterified to the alpha-carboxyl of the C-terminal aspartate after propeptide cleavage.</text>
</comment>
<comment type="similarity">
    <text evidence="6">Belongs to the ITIH family.</text>
</comment>